<dbReference type="EMBL" id="CP000024">
    <property type="protein sequence ID" value="AAV62356.1"/>
    <property type="molecule type" value="Genomic_DNA"/>
</dbReference>
<dbReference type="RefSeq" id="WP_002950439.1">
    <property type="nucleotide sequence ID" value="NC_006449.1"/>
</dbReference>
<dbReference type="SMR" id="Q5M0A6"/>
<dbReference type="GeneID" id="66898661"/>
<dbReference type="KEGG" id="stc:str0763"/>
<dbReference type="HOGENOM" id="CLU_108696_19_0_9"/>
<dbReference type="UniPathway" id="UPA00556"/>
<dbReference type="GO" id="GO:0005737">
    <property type="term" value="C:cytoplasm"/>
    <property type="evidence" value="ECO:0007669"/>
    <property type="project" value="UniProtKB-SubCell"/>
</dbReference>
<dbReference type="GO" id="GO:0036370">
    <property type="term" value="F:D-alanyl carrier activity"/>
    <property type="evidence" value="ECO:0007669"/>
    <property type="project" value="UniProtKB-UniRule"/>
</dbReference>
<dbReference type="GO" id="GO:0071555">
    <property type="term" value="P:cell wall organization"/>
    <property type="evidence" value="ECO:0007669"/>
    <property type="project" value="UniProtKB-KW"/>
</dbReference>
<dbReference type="GO" id="GO:0070395">
    <property type="term" value="P:lipoteichoic acid biosynthetic process"/>
    <property type="evidence" value="ECO:0007669"/>
    <property type="project" value="UniProtKB-UniRule"/>
</dbReference>
<dbReference type="Gene3D" id="1.10.1200.10">
    <property type="entry name" value="ACP-like"/>
    <property type="match status" value="1"/>
</dbReference>
<dbReference type="HAMAP" id="MF_00565">
    <property type="entry name" value="DltC"/>
    <property type="match status" value="1"/>
</dbReference>
<dbReference type="InterPro" id="IPR036736">
    <property type="entry name" value="ACP-like_sf"/>
</dbReference>
<dbReference type="InterPro" id="IPR003230">
    <property type="entry name" value="DltC"/>
</dbReference>
<dbReference type="InterPro" id="IPR009081">
    <property type="entry name" value="PP-bd_ACP"/>
</dbReference>
<dbReference type="NCBIfam" id="TIGR01688">
    <property type="entry name" value="dltC"/>
    <property type="match status" value="1"/>
</dbReference>
<dbReference type="NCBIfam" id="NF003464">
    <property type="entry name" value="PRK05087.1"/>
    <property type="match status" value="1"/>
</dbReference>
<dbReference type="Pfam" id="PF00550">
    <property type="entry name" value="PP-binding"/>
    <property type="match status" value="1"/>
</dbReference>
<dbReference type="SUPFAM" id="SSF47336">
    <property type="entry name" value="ACP-like"/>
    <property type="match status" value="1"/>
</dbReference>
<dbReference type="PROSITE" id="PS50075">
    <property type="entry name" value="CARRIER"/>
    <property type="match status" value="1"/>
</dbReference>
<reference key="1">
    <citation type="journal article" date="2004" name="Nat. Biotechnol.">
        <title>Complete sequence and comparative genome analysis of the dairy bacterium Streptococcus thermophilus.</title>
        <authorList>
            <person name="Bolotin A."/>
            <person name="Quinquis B."/>
            <person name="Renault P."/>
            <person name="Sorokin A."/>
            <person name="Ehrlich S.D."/>
            <person name="Kulakauskas S."/>
            <person name="Lapidus A."/>
            <person name="Goltsman E."/>
            <person name="Mazur M."/>
            <person name="Pusch G.D."/>
            <person name="Fonstein M."/>
            <person name="Overbeek R."/>
            <person name="Kyprides N."/>
            <person name="Purnelle B."/>
            <person name="Prozzi D."/>
            <person name="Ngui K."/>
            <person name="Masuy D."/>
            <person name="Hancy F."/>
            <person name="Burteau S."/>
            <person name="Boutry M."/>
            <person name="Delcour J."/>
            <person name="Goffeau A."/>
            <person name="Hols P."/>
        </authorList>
    </citation>
    <scope>NUCLEOTIDE SEQUENCE [LARGE SCALE GENOMIC DNA]</scope>
    <source>
        <strain>CNRZ 1066</strain>
    </source>
</reference>
<feature type="chain" id="PRO_1000024937" description="D-alanyl carrier protein">
    <location>
        <begin position="1"/>
        <end position="79"/>
    </location>
</feature>
<feature type="domain" description="Carrier" evidence="1">
    <location>
        <begin position="1"/>
        <end position="77"/>
    </location>
</feature>
<feature type="modified residue" description="O-(pantetheine 4'-phosphoryl)serine" evidence="1">
    <location>
        <position position="35"/>
    </location>
</feature>
<sequence length="79" mass="8969">MDVKAEVIEIIDELFMEDVSDMMDEDLFDAGVLDSMGTVELIVELESRFDIRVPVSEFGRDDWNTANKIVEGVTELRNA</sequence>
<keyword id="KW-0961">Cell wall biogenesis/degradation</keyword>
<keyword id="KW-0963">Cytoplasm</keyword>
<keyword id="KW-0596">Phosphopantetheine</keyword>
<keyword id="KW-0597">Phosphoprotein</keyword>
<proteinExistence type="inferred from homology"/>
<protein>
    <recommendedName>
        <fullName evidence="1">D-alanyl carrier protein</fullName>
        <shortName evidence="1">DCP</shortName>
    </recommendedName>
    <alternativeName>
        <fullName evidence="1">D-alanine--poly(phosphoribitol) ligase subunit 2</fullName>
    </alternativeName>
</protein>
<accession>Q5M0A6</accession>
<gene>
    <name evidence="1" type="primary">dltC</name>
    <name type="ordered locus">str0763</name>
</gene>
<organism>
    <name type="scientific">Streptococcus thermophilus (strain CNRZ 1066)</name>
    <dbReference type="NCBI Taxonomy" id="299768"/>
    <lineage>
        <taxon>Bacteria</taxon>
        <taxon>Bacillati</taxon>
        <taxon>Bacillota</taxon>
        <taxon>Bacilli</taxon>
        <taxon>Lactobacillales</taxon>
        <taxon>Streptococcaceae</taxon>
        <taxon>Streptococcus</taxon>
    </lineage>
</organism>
<evidence type="ECO:0000255" key="1">
    <source>
        <dbReference type="HAMAP-Rule" id="MF_00565"/>
    </source>
</evidence>
<name>DLTC_STRT1</name>
<comment type="function">
    <text evidence="1">Carrier protein involved in the D-alanylation of lipoteichoic acid (LTA). The loading of thioester-linked D-alanine onto DltC is catalyzed by D-alanine--D-alanyl carrier protein ligase DltA. The DltC-carried D-alanyl group is further transferred to cell membrane phosphatidylglycerol (PG) by forming an ester bond, probably catalyzed by DltD. D-alanylation of LTA plays an important role in modulating the properties of the cell wall in Gram-positive bacteria, influencing the net charge of the cell wall.</text>
</comment>
<comment type="pathway">
    <text evidence="1">Cell wall biogenesis; lipoteichoic acid biosynthesis.</text>
</comment>
<comment type="subcellular location">
    <subcellularLocation>
        <location evidence="1">Cytoplasm</location>
    </subcellularLocation>
</comment>
<comment type="PTM">
    <text evidence="1">4'-phosphopantetheine is transferred from CoA to a specific serine of apo-DCP.</text>
</comment>
<comment type="similarity">
    <text evidence="1">Belongs to the DltC family.</text>
</comment>